<evidence type="ECO:0000255" key="1">
    <source>
        <dbReference type="HAMAP-Rule" id="MF_01451"/>
    </source>
</evidence>
<accession>B7HGP9</accession>
<feature type="chain" id="PRO_0000379236" description="ATP-dependent helicase/nuclease subunit A">
    <location>
        <begin position="1"/>
        <end position="1241"/>
    </location>
</feature>
<feature type="domain" description="UvrD-like helicase ATP-binding" evidence="1">
    <location>
        <begin position="12"/>
        <end position="485"/>
    </location>
</feature>
<feature type="domain" description="UvrD-like helicase C-terminal" evidence="1">
    <location>
        <begin position="505"/>
        <end position="805"/>
    </location>
</feature>
<feature type="binding site" evidence="1">
    <location>
        <begin position="33"/>
        <end position="40"/>
    </location>
    <ligand>
        <name>ATP</name>
        <dbReference type="ChEBI" id="CHEBI:30616"/>
    </ligand>
</feature>
<organism>
    <name type="scientific">Bacillus cereus (strain B4264)</name>
    <dbReference type="NCBI Taxonomy" id="405532"/>
    <lineage>
        <taxon>Bacteria</taxon>
        <taxon>Bacillati</taxon>
        <taxon>Bacillota</taxon>
        <taxon>Bacilli</taxon>
        <taxon>Bacillales</taxon>
        <taxon>Bacillaceae</taxon>
        <taxon>Bacillus</taxon>
        <taxon>Bacillus cereus group</taxon>
    </lineage>
</organism>
<protein>
    <recommendedName>
        <fullName evidence="1">ATP-dependent helicase/nuclease subunit A</fullName>
        <ecNumber evidence="1">3.1.-.-</ecNumber>
        <ecNumber evidence="1">5.6.2.4</ecNumber>
    </recommendedName>
    <alternativeName>
        <fullName evidence="1">ATP-dependent helicase/nuclease AddA</fullName>
    </alternativeName>
    <alternativeName>
        <fullName evidence="1">DNA 3'-5' helicase AddA</fullName>
    </alternativeName>
</protein>
<gene>
    <name evidence="1" type="primary">addA</name>
    <name type="ordered locus">BCB4264_A1193</name>
</gene>
<keyword id="KW-0067">ATP-binding</keyword>
<keyword id="KW-0227">DNA damage</keyword>
<keyword id="KW-0234">DNA repair</keyword>
<keyword id="KW-0238">DNA-binding</keyword>
<keyword id="KW-0269">Exonuclease</keyword>
<keyword id="KW-0347">Helicase</keyword>
<keyword id="KW-0378">Hydrolase</keyword>
<keyword id="KW-0413">Isomerase</keyword>
<keyword id="KW-0540">Nuclease</keyword>
<keyword id="KW-0547">Nucleotide-binding</keyword>
<sequence>MIENWPKKPEGSQWTDDQWKAVVANGRDILVAAAAGSGKTAVLVERIIKKIINEENPVDVDRLLVVTFTNAAAQEMKNRIGEALEKVLIDEPGSQHVRKQLSLLNKASISTIHSFCLQVIRGYYYMLDVDPRFRIANQTENELLKEEVLDDILEEEYGIEDNTIFFELVDRYTSDRSDDDLQRMILALHTESRAHPNPEKWLDKLVEAYDVEGKTIEDLVYASYLLEDVKFQLETAEQHIRKATELAMLPDGPAPRIETLQADLALLGTLSSAAHESWTSLYEAMQNVSWQTLKRIKKSDYNEDVVKQVDSLRNKAKDEVKKLQEELFSRKPESFLRDFQDMHPVLEKLVQLVKVFTERFQAMKRDKGMVDFTDLEHFCLQILSEQSENGEMNPSAVALQYRNKFAEVLVDEYQDTNFVQESIIKFVTKDSESEGNLFMVGDVKQSIYRFRLAEPGLFLGKYKRFTQEGLGGGMKIDLAKNFRSRHEVLAGTNFIFKQIMGEEVGEIDYDADAELKLGATYPEGEDVAAELLCIQQTEEEVIDGEEGAEVEKAQLEARLMAQRIKAMVDSGYEVYDRKNDSMRPVQYRDFVILLRSMPWAPQIMEELKLQGIPVYADLATGYFEATEVNIMMNVFRVIDNPMQDIPLAAVLRSPIVGLSDEELATLRAHGKKGSFYEVMSSFLKGAPLEEEQELHDKLEWFYNLLQGWREFARQQSLSDLIWKVYGETGYYDFVGGLPAGKQRQANLRVLYDRARQYEATSFRGLFRFLRFIERILERGDDMGTARALGEQEDVVRIMTIHKSKGLEFPVVFVAGLGRRFNTQDLMKRFLLHKDFGFGSQFIDPRKRIKYTTLSQLAIKRKMKMELIAEEMRVLYVALTRAKEKLILIGTVKDANKEMEKWLDAREHSEWLLPDHIRAGASCYLDWIAPSLYRHRDSEMLLELGQGSIPDEIYGYDTSWKVEVVDGNTLLAPEPVQEEKQELLEALREKKAVPLESERKDEVYDRLMWKYGYEEATSHRAKQSVTEIKRNYQSEDGSDNAFIKKLRAPIKTRPRFMEKKGLTYAERGTAVHAVMQHVDLKKPITVEVLQEQIAGMVNKELLTFEQAEEIAIEKVISFFDSDLGKKVLAAKSVEREVPFTMMLAAEEAYQDWQGNSGESILVQGVIDCMIEEEDGITLIDFKTDTIEGKFPGGFEQAKPILEDRYKVQLSLYAKALEKSLQHPVKEKCLYFFDGNHVVNIEE</sequence>
<reference key="1">
    <citation type="submission" date="2008-10" db="EMBL/GenBank/DDBJ databases">
        <title>Genome sequence of Bacillus cereus B4264.</title>
        <authorList>
            <person name="Dodson R.J."/>
            <person name="Durkin A.S."/>
            <person name="Rosovitz M.J."/>
            <person name="Rasko D.A."/>
            <person name="Hoffmaster A."/>
            <person name="Ravel J."/>
            <person name="Sutton G."/>
        </authorList>
    </citation>
    <scope>NUCLEOTIDE SEQUENCE [LARGE SCALE GENOMIC DNA]</scope>
    <source>
        <strain>B4264</strain>
    </source>
</reference>
<dbReference type="EC" id="3.1.-.-" evidence="1"/>
<dbReference type="EC" id="5.6.2.4" evidence="1"/>
<dbReference type="EMBL" id="CP001176">
    <property type="protein sequence ID" value="ACK61166.1"/>
    <property type="molecule type" value="Genomic_DNA"/>
</dbReference>
<dbReference type="RefSeq" id="WP_000572291.1">
    <property type="nucleotide sequence ID" value="NC_011725.1"/>
</dbReference>
<dbReference type="SMR" id="B7HGP9"/>
<dbReference type="KEGG" id="bcb:BCB4264_A1193"/>
<dbReference type="HOGENOM" id="CLU_001114_3_1_9"/>
<dbReference type="Proteomes" id="UP000007096">
    <property type="component" value="Chromosome"/>
</dbReference>
<dbReference type="GO" id="GO:0005829">
    <property type="term" value="C:cytosol"/>
    <property type="evidence" value="ECO:0007669"/>
    <property type="project" value="TreeGrafter"/>
</dbReference>
<dbReference type="GO" id="GO:0033202">
    <property type="term" value="C:DNA helicase complex"/>
    <property type="evidence" value="ECO:0007669"/>
    <property type="project" value="TreeGrafter"/>
</dbReference>
<dbReference type="GO" id="GO:0043138">
    <property type="term" value="F:3'-5' DNA helicase activity"/>
    <property type="evidence" value="ECO:0007669"/>
    <property type="project" value="UniProtKB-UniRule"/>
</dbReference>
<dbReference type="GO" id="GO:0008408">
    <property type="term" value="F:3'-5' exonuclease activity"/>
    <property type="evidence" value="ECO:0007669"/>
    <property type="project" value="UniProtKB-UniRule"/>
</dbReference>
<dbReference type="GO" id="GO:0005524">
    <property type="term" value="F:ATP binding"/>
    <property type="evidence" value="ECO:0007669"/>
    <property type="project" value="UniProtKB-UniRule"/>
</dbReference>
<dbReference type="GO" id="GO:0016887">
    <property type="term" value="F:ATP hydrolysis activity"/>
    <property type="evidence" value="ECO:0007669"/>
    <property type="project" value="RHEA"/>
</dbReference>
<dbReference type="GO" id="GO:0003690">
    <property type="term" value="F:double-stranded DNA binding"/>
    <property type="evidence" value="ECO:0007669"/>
    <property type="project" value="UniProtKB-UniRule"/>
</dbReference>
<dbReference type="GO" id="GO:0000724">
    <property type="term" value="P:double-strand break repair via homologous recombination"/>
    <property type="evidence" value="ECO:0007669"/>
    <property type="project" value="UniProtKB-UniRule"/>
</dbReference>
<dbReference type="CDD" id="cd18807">
    <property type="entry name" value="SF1_C_UvrD"/>
    <property type="match status" value="1"/>
</dbReference>
<dbReference type="FunFam" id="3.40.50.300:FF:001164">
    <property type="entry name" value="ATP-dependent helicase/nuclease subunit A"/>
    <property type="match status" value="1"/>
</dbReference>
<dbReference type="FunFam" id="3.40.50.300:FF:001187">
    <property type="entry name" value="ATP-dependent helicase/nuclease subunit A"/>
    <property type="match status" value="1"/>
</dbReference>
<dbReference type="FunFam" id="3.40.50.300:FF:001196">
    <property type="entry name" value="ATP-dependent helicase/nuclease subunit A"/>
    <property type="match status" value="1"/>
</dbReference>
<dbReference type="FunFam" id="3.40.50.300:FF:001236">
    <property type="entry name" value="ATP-dependent helicase/nuclease subunit A"/>
    <property type="match status" value="1"/>
</dbReference>
<dbReference type="FunFam" id="3.90.320.10:FF:000008">
    <property type="entry name" value="ATP-dependent helicase/nuclease subunit A"/>
    <property type="match status" value="1"/>
</dbReference>
<dbReference type="Gene3D" id="3.90.320.10">
    <property type="match status" value="1"/>
</dbReference>
<dbReference type="Gene3D" id="6.10.250.2380">
    <property type="match status" value="1"/>
</dbReference>
<dbReference type="Gene3D" id="3.40.50.300">
    <property type="entry name" value="P-loop containing nucleotide triphosphate hydrolases"/>
    <property type="match status" value="4"/>
</dbReference>
<dbReference type="HAMAP" id="MF_01451">
    <property type="entry name" value="AddA"/>
    <property type="match status" value="1"/>
</dbReference>
<dbReference type="InterPro" id="IPR014152">
    <property type="entry name" value="AddA"/>
</dbReference>
<dbReference type="InterPro" id="IPR014017">
    <property type="entry name" value="DNA_helicase_UvrD-like_C"/>
</dbReference>
<dbReference type="InterPro" id="IPR000212">
    <property type="entry name" value="DNA_helicase_UvrD/REP"/>
</dbReference>
<dbReference type="InterPro" id="IPR027417">
    <property type="entry name" value="P-loop_NTPase"/>
</dbReference>
<dbReference type="InterPro" id="IPR011604">
    <property type="entry name" value="PDDEXK-like_dom_sf"/>
</dbReference>
<dbReference type="InterPro" id="IPR038726">
    <property type="entry name" value="PDDEXK_AddAB-type"/>
</dbReference>
<dbReference type="InterPro" id="IPR011335">
    <property type="entry name" value="Restrct_endonuc-II-like"/>
</dbReference>
<dbReference type="InterPro" id="IPR014016">
    <property type="entry name" value="UvrD-like_ATP-bd"/>
</dbReference>
<dbReference type="NCBIfam" id="TIGR02785">
    <property type="entry name" value="addA_Gpos"/>
    <property type="match status" value="1"/>
</dbReference>
<dbReference type="PANTHER" id="PTHR11070:SF48">
    <property type="entry name" value="ATP-DEPENDENT HELICASE_NUCLEASE SUBUNIT A"/>
    <property type="match status" value="1"/>
</dbReference>
<dbReference type="PANTHER" id="PTHR11070">
    <property type="entry name" value="UVRD / RECB / PCRA DNA HELICASE FAMILY MEMBER"/>
    <property type="match status" value="1"/>
</dbReference>
<dbReference type="Pfam" id="PF12705">
    <property type="entry name" value="PDDEXK_1"/>
    <property type="match status" value="1"/>
</dbReference>
<dbReference type="Pfam" id="PF00580">
    <property type="entry name" value="UvrD-helicase"/>
    <property type="match status" value="1"/>
</dbReference>
<dbReference type="Pfam" id="PF13361">
    <property type="entry name" value="UvrD_C"/>
    <property type="match status" value="1"/>
</dbReference>
<dbReference type="SUPFAM" id="SSF52540">
    <property type="entry name" value="P-loop containing nucleoside triphosphate hydrolases"/>
    <property type="match status" value="1"/>
</dbReference>
<dbReference type="SUPFAM" id="SSF52980">
    <property type="entry name" value="Restriction endonuclease-like"/>
    <property type="match status" value="1"/>
</dbReference>
<dbReference type="PROSITE" id="PS51198">
    <property type="entry name" value="UVRD_HELICASE_ATP_BIND"/>
    <property type="match status" value="1"/>
</dbReference>
<dbReference type="PROSITE" id="PS51217">
    <property type="entry name" value="UVRD_HELICASE_CTER"/>
    <property type="match status" value="1"/>
</dbReference>
<comment type="function">
    <text evidence="1">The heterodimer acts as both an ATP-dependent DNA helicase and an ATP-dependent, dual-direction single-stranded exonuclease. Recognizes the chi site generating a DNA molecule suitable for the initiation of homologous recombination. The AddA nuclease domain is required for chi fragment generation; this subunit has the helicase and 3' -&gt; 5' nuclease activities.</text>
</comment>
<comment type="catalytic activity">
    <reaction evidence="1">
        <text>Couples ATP hydrolysis with the unwinding of duplex DNA by translocating in the 3'-5' direction.</text>
        <dbReference type="EC" id="5.6.2.4"/>
    </reaction>
</comment>
<comment type="catalytic activity">
    <reaction evidence="1">
        <text>ATP + H2O = ADP + phosphate + H(+)</text>
        <dbReference type="Rhea" id="RHEA:13065"/>
        <dbReference type="ChEBI" id="CHEBI:15377"/>
        <dbReference type="ChEBI" id="CHEBI:15378"/>
        <dbReference type="ChEBI" id="CHEBI:30616"/>
        <dbReference type="ChEBI" id="CHEBI:43474"/>
        <dbReference type="ChEBI" id="CHEBI:456216"/>
        <dbReference type="EC" id="5.6.2.4"/>
    </reaction>
</comment>
<comment type="cofactor">
    <cofactor evidence="1">
        <name>Mg(2+)</name>
        <dbReference type="ChEBI" id="CHEBI:18420"/>
    </cofactor>
</comment>
<comment type="subunit">
    <text evidence="1">Heterodimer of AddA and AddB/RexB.</text>
</comment>
<comment type="similarity">
    <text evidence="1">Belongs to the helicase family. AddA subfamily.</text>
</comment>
<name>ADDA_BACC4</name>
<proteinExistence type="inferred from homology"/>